<gene>
    <name type="ordered locus">BTH_I3236</name>
</gene>
<feature type="chain" id="PRO_0000253091" description="Putative membrane protein insertion efficiency factor">
    <location>
        <begin position="1"/>
        <end position="89"/>
    </location>
</feature>
<feature type="region of interest" description="Disordered" evidence="2">
    <location>
        <begin position="68"/>
        <end position="89"/>
    </location>
</feature>
<feature type="compositionally biased region" description="Basic and acidic residues" evidence="2">
    <location>
        <begin position="77"/>
        <end position="89"/>
    </location>
</feature>
<organism>
    <name type="scientific">Burkholderia thailandensis (strain ATCC 700388 / DSM 13276 / CCUG 48851 / CIP 106301 / E264)</name>
    <dbReference type="NCBI Taxonomy" id="271848"/>
    <lineage>
        <taxon>Bacteria</taxon>
        <taxon>Pseudomonadati</taxon>
        <taxon>Pseudomonadota</taxon>
        <taxon>Betaproteobacteria</taxon>
        <taxon>Burkholderiales</taxon>
        <taxon>Burkholderiaceae</taxon>
        <taxon>Burkholderia</taxon>
        <taxon>pseudomallei group</taxon>
    </lineage>
</organism>
<name>YIDD_BURTA</name>
<reference key="1">
    <citation type="journal article" date="2005" name="BMC Genomics">
        <title>Bacterial genome adaptation to niches: divergence of the potential virulence genes in three Burkholderia species of different survival strategies.</title>
        <authorList>
            <person name="Kim H.S."/>
            <person name="Schell M.A."/>
            <person name="Yu Y."/>
            <person name="Ulrich R.L."/>
            <person name="Sarria S.H."/>
            <person name="Nierman W.C."/>
            <person name="DeShazer D."/>
        </authorList>
    </citation>
    <scope>NUCLEOTIDE SEQUENCE [LARGE SCALE GENOMIC DNA]</scope>
    <source>
        <strain>ATCC 700388 / DSM 13276 / CCUG 48851 / CIP 106301 / E264</strain>
    </source>
</reference>
<comment type="function">
    <text evidence="1">Could be involved in insertion of integral membrane proteins into the membrane.</text>
</comment>
<comment type="subcellular location">
    <subcellularLocation>
        <location evidence="1">Cell inner membrane</location>
        <topology evidence="1">Peripheral membrane protein</topology>
        <orientation evidence="1">Cytoplasmic side</orientation>
    </subcellularLocation>
</comment>
<comment type="similarity">
    <text evidence="1">Belongs to the UPF0161 family.</text>
</comment>
<keyword id="KW-0997">Cell inner membrane</keyword>
<keyword id="KW-1003">Cell membrane</keyword>
<keyword id="KW-0472">Membrane</keyword>
<evidence type="ECO:0000255" key="1">
    <source>
        <dbReference type="HAMAP-Rule" id="MF_00386"/>
    </source>
</evidence>
<evidence type="ECO:0000256" key="2">
    <source>
        <dbReference type="SAM" id="MobiDB-lite"/>
    </source>
</evidence>
<protein>
    <recommendedName>
        <fullName evidence="1">Putative membrane protein insertion efficiency factor</fullName>
    </recommendedName>
</protein>
<proteinExistence type="inferred from homology"/>
<accession>Q2STL9</accession>
<dbReference type="EMBL" id="CP000086">
    <property type="protein sequence ID" value="ABC39045.1"/>
    <property type="molecule type" value="Genomic_DNA"/>
</dbReference>
<dbReference type="GeneID" id="45122914"/>
<dbReference type="KEGG" id="bte:BTH_I3236"/>
<dbReference type="HOGENOM" id="CLU_144811_2_2_4"/>
<dbReference type="Proteomes" id="UP000001930">
    <property type="component" value="Chromosome I"/>
</dbReference>
<dbReference type="GO" id="GO:0005886">
    <property type="term" value="C:plasma membrane"/>
    <property type="evidence" value="ECO:0007669"/>
    <property type="project" value="UniProtKB-SubCell"/>
</dbReference>
<dbReference type="HAMAP" id="MF_00386">
    <property type="entry name" value="UPF0161_YidD"/>
    <property type="match status" value="1"/>
</dbReference>
<dbReference type="InterPro" id="IPR002696">
    <property type="entry name" value="Membr_insert_effic_factor_YidD"/>
</dbReference>
<dbReference type="NCBIfam" id="TIGR00278">
    <property type="entry name" value="membrane protein insertion efficiency factor YidD"/>
    <property type="match status" value="1"/>
</dbReference>
<dbReference type="PANTHER" id="PTHR33383">
    <property type="entry name" value="MEMBRANE PROTEIN INSERTION EFFICIENCY FACTOR-RELATED"/>
    <property type="match status" value="1"/>
</dbReference>
<dbReference type="PANTHER" id="PTHR33383:SF1">
    <property type="entry name" value="MEMBRANE PROTEIN INSERTION EFFICIENCY FACTOR-RELATED"/>
    <property type="match status" value="1"/>
</dbReference>
<dbReference type="Pfam" id="PF01809">
    <property type="entry name" value="YidD"/>
    <property type="match status" value="1"/>
</dbReference>
<dbReference type="SMART" id="SM01234">
    <property type="entry name" value="Haemolytic"/>
    <property type="match status" value="1"/>
</dbReference>
<sequence>MQTVLIALLRFYKLAVSPLLGSRCRFYPSCSDYAREAIQYHGAARGTYLAARRLCRCHPFSAGGIDLVPPPNSDARNAPHEAEASSHRL</sequence>